<evidence type="ECO:0000255" key="1">
    <source>
        <dbReference type="HAMAP-Rule" id="MF_01589"/>
    </source>
</evidence>
<reference key="1">
    <citation type="submission" date="2007-10" db="EMBL/GenBank/DDBJ databases">
        <title>Complete sequence of Shewanella pealeana ATCC 700345.</title>
        <authorList>
            <consortium name="US DOE Joint Genome Institute"/>
            <person name="Copeland A."/>
            <person name="Lucas S."/>
            <person name="Lapidus A."/>
            <person name="Barry K."/>
            <person name="Glavina del Rio T."/>
            <person name="Dalin E."/>
            <person name="Tice H."/>
            <person name="Pitluck S."/>
            <person name="Chertkov O."/>
            <person name="Brettin T."/>
            <person name="Bruce D."/>
            <person name="Detter J.C."/>
            <person name="Han C."/>
            <person name="Schmutz J."/>
            <person name="Larimer F."/>
            <person name="Land M."/>
            <person name="Hauser L."/>
            <person name="Kyrpides N."/>
            <person name="Kim E."/>
            <person name="Zhao J.-S.Z."/>
            <person name="Manno D."/>
            <person name="Hawari J."/>
            <person name="Richardson P."/>
        </authorList>
    </citation>
    <scope>NUCLEOTIDE SEQUENCE [LARGE SCALE GENOMIC DNA]</scope>
    <source>
        <strain>ATCC 700345 / ANG-SQ1</strain>
    </source>
</reference>
<protein>
    <recommendedName>
        <fullName evidence="1">Carboxy-S-adenosyl-L-methionine synthase</fullName>
        <shortName evidence="1">Cx-SAM synthase</shortName>
        <ecNumber evidence="1">2.1.3.-</ecNumber>
    </recommendedName>
</protein>
<dbReference type="EC" id="2.1.3.-" evidence="1"/>
<dbReference type="EMBL" id="CP000851">
    <property type="protein sequence ID" value="ABV87688.1"/>
    <property type="molecule type" value="Genomic_DNA"/>
</dbReference>
<dbReference type="RefSeq" id="WP_012155602.1">
    <property type="nucleotide sequence ID" value="NC_009901.1"/>
</dbReference>
<dbReference type="SMR" id="A8H551"/>
<dbReference type="STRING" id="398579.Spea_2368"/>
<dbReference type="KEGG" id="spl:Spea_2368"/>
<dbReference type="eggNOG" id="COG2226">
    <property type="taxonomic scope" value="Bacteria"/>
</dbReference>
<dbReference type="HOGENOM" id="CLU_078475_0_0_6"/>
<dbReference type="OrthoDB" id="9779941at2"/>
<dbReference type="Proteomes" id="UP000002608">
    <property type="component" value="Chromosome"/>
</dbReference>
<dbReference type="GO" id="GO:0016743">
    <property type="term" value="F:carboxyl- or carbamoyltransferase activity"/>
    <property type="evidence" value="ECO:0007669"/>
    <property type="project" value="UniProtKB-UniRule"/>
</dbReference>
<dbReference type="GO" id="GO:1904047">
    <property type="term" value="F:S-adenosyl-L-methionine binding"/>
    <property type="evidence" value="ECO:0007669"/>
    <property type="project" value="UniProtKB-UniRule"/>
</dbReference>
<dbReference type="GO" id="GO:0002098">
    <property type="term" value="P:tRNA wobble uridine modification"/>
    <property type="evidence" value="ECO:0007669"/>
    <property type="project" value="InterPro"/>
</dbReference>
<dbReference type="CDD" id="cd02440">
    <property type="entry name" value="AdoMet_MTases"/>
    <property type="match status" value="1"/>
</dbReference>
<dbReference type="Gene3D" id="3.40.50.150">
    <property type="entry name" value="Vaccinia Virus protein VP39"/>
    <property type="match status" value="1"/>
</dbReference>
<dbReference type="HAMAP" id="MF_01589">
    <property type="entry name" value="Cx_SAM_synthase"/>
    <property type="match status" value="1"/>
</dbReference>
<dbReference type="InterPro" id="IPR005271">
    <property type="entry name" value="CmoA"/>
</dbReference>
<dbReference type="InterPro" id="IPR041698">
    <property type="entry name" value="Methyltransf_25"/>
</dbReference>
<dbReference type="InterPro" id="IPR029063">
    <property type="entry name" value="SAM-dependent_MTases_sf"/>
</dbReference>
<dbReference type="NCBIfam" id="TIGR00740">
    <property type="entry name" value="carboxy-S-adenosyl-L-methionine synthase CmoA"/>
    <property type="match status" value="1"/>
</dbReference>
<dbReference type="NCBIfam" id="NF011995">
    <property type="entry name" value="PRK15451.1"/>
    <property type="match status" value="1"/>
</dbReference>
<dbReference type="PANTHER" id="PTHR43861:SF2">
    <property type="entry name" value="CARBOXY-S-ADENOSYL-L-METHIONINE SYNTHASE"/>
    <property type="match status" value="1"/>
</dbReference>
<dbReference type="PANTHER" id="PTHR43861">
    <property type="entry name" value="TRANS-ACONITATE 2-METHYLTRANSFERASE-RELATED"/>
    <property type="match status" value="1"/>
</dbReference>
<dbReference type="Pfam" id="PF13649">
    <property type="entry name" value="Methyltransf_25"/>
    <property type="match status" value="1"/>
</dbReference>
<dbReference type="PIRSF" id="PIRSF006325">
    <property type="entry name" value="MeTrfase_bac"/>
    <property type="match status" value="1"/>
</dbReference>
<dbReference type="SUPFAM" id="SSF53335">
    <property type="entry name" value="S-adenosyl-L-methionine-dependent methyltransferases"/>
    <property type="match status" value="1"/>
</dbReference>
<gene>
    <name evidence="1" type="primary">cmoA</name>
    <name type="ordered locus">Spea_2368</name>
</gene>
<comment type="function">
    <text evidence="1">Catalyzes the conversion of S-adenosyl-L-methionine (SAM) to carboxy-S-adenosyl-L-methionine (Cx-SAM).</text>
</comment>
<comment type="catalytic activity">
    <reaction evidence="1">
        <text>prephenate + S-adenosyl-L-methionine = carboxy-S-adenosyl-L-methionine + 3-phenylpyruvate + H2O</text>
        <dbReference type="Rhea" id="RHEA:51692"/>
        <dbReference type="ChEBI" id="CHEBI:15377"/>
        <dbReference type="ChEBI" id="CHEBI:18005"/>
        <dbReference type="ChEBI" id="CHEBI:29934"/>
        <dbReference type="ChEBI" id="CHEBI:59789"/>
        <dbReference type="ChEBI" id="CHEBI:134278"/>
    </reaction>
</comment>
<comment type="subunit">
    <text evidence="1">Homodimer.</text>
</comment>
<comment type="similarity">
    <text evidence="1">Belongs to the class I-like SAM-binding methyltransferase superfamily. Cx-SAM synthase family.</text>
</comment>
<keyword id="KW-1185">Reference proteome</keyword>
<keyword id="KW-0949">S-adenosyl-L-methionine</keyword>
<keyword id="KW-0808">Transferase</keyword>
<proteinExistence type="inferred from homology"/>
<accession>A8H551</accession>
<feature type="chain" id="PRO_1000087965" description="Carboxy-S-adenosyl-L-methionine synthase">
    <location>
        <begin position="1"/>
        <end position="243"/>
    </location>
</feature>
<feature type="binding site" evidence="1">
    <location>
        <position position="40"/>
    </location>
    <ligand>
        <name>S-adenosyl-L-methionine</name>
        <dbReference type="ChEBI" id="CHEBI:59789"/>
    </ligand>
</feature>
<feature type="binding site" evidence="1">
    <location>
        <begin position="65"/>
        <end position="67"/>
    </location>
    <ligand>
        <name>S-adenosyl-L-methionine</name>
        <dbReference type="ChEBI" id="CHEBI:59789"/>
    </ligand>
</feature>
<feature type="binding site" evidence="1">
    <location>
        <begin position="90"/>
        <end position="91"/>
    </location>
    <ligand>
        <name>S-adenosyl-L-methionine</name>
        <dbReference type="ChEBI" id="CHEBI:59789"/>
    </ligand>
</feature>
<feature type="binding site" evidence="1">
    <location>
        <begin position="118"/>
        <end position="119"/>
    </location>
    <ligand>
        <name>S-adenosyl-L-methionine</name>
        <dbReference type="ChEBI" id="CHEBI:59789"/>
    </ligand>
</feature>
<feature type="binding site" evidence="1">
    <location>
        <position position="133"/>
    </location>
    <ligand>
        <name>S-adenosyl-L-methionine</name>
        <dbReference type="ChEBI" id="CHEBI:59789"/>
    </ligand>
</feature>
<feature type="binding site" evidence="1">
    <location>
        <position position="200"/>
    </location>
    <ligand>
        <name>S-adenosyl-L-methionine</name>
        <dbReference type="ChEBI" id="CHEBI:59789"/>
    </ligand>
</feature>
<name>CMOA_SHEPA</name>
<sequence>MNSSQDNLFAKPYEHVSDFQFDDKVAGVFNDMIRRSVPGYGQIINTIGDLAQKYATPNSKIYDLGCSLGAATLSIRRRVEGRNCQIIAIDNSESMIERCNENLSAYVSETPVELVCGDIRDIKIENASLVVLNFTMQFLAPSDRESLLKNIYQGLVPGGLLVLSEKLYFKEDNIQTTLDDLHLDFKRANGYSELEISQKRSSLENVMKPDTLVEHENRIRAQGFSQFSVWFQCFNFASMVAIK</sequence>
<organism>
    <name type="scientific">Shewanella pealeana (strain ATCC 700345 / ANG-SQ1)</name>
    <dbReference type="NCBI Taxonomy" id="398579"/>
    <lineage>
        <taxon>Bacteria</taxon>
        <taxon>Pseudomonadati</taxon>
        <taxon>Pseudomonadota</taxon>
        <taxon>Gammaproteobacteria</taxon>
        <taxon>Alteromonadales</taxon>
        <taxon>Shewanellaceae</taxon>
        <taxon>Shewanella</taxon>
    </lineage>
</organism>